<dbReference type="EC" id="2.7.2.8" evidence="1"/>
<dbReference type="EMBL" id="BA000018">
    <property type="protein sequence ID" value="BAB41397.1"/>
    <property type="molecule type" value="Genomic_DNA"/>
</dbReference>
<dbReference type="PIR" id="B89780">
    <property type="entry name" value="B89780"/>
</dbReference>
<dbReference type="RefSeq" id="WP_000668894.1">
    <property type="nucleotide sequence ID" value="NC_002745.2"/>
</dbReference>
<dbReference type="SMR" id="P63560"/>
<dbReference type="EnsemblBacteria" id="BAB41397">
    <property type="protein sequence ID" value="BAB41397"/>
    <property type="gene ID" value="BAB41397"/>
</dbReference>
<dbReference type="KEGG" id="sau:SA0176"/>
<dbReference type="HOGENOM" id="CLU_053680_1_0_9"/>
<dbReference type="UniPathway" id="UPA00068">
    <property type="reaction ID" value="UER00107"/>
</dbReference>
<dbReference type="GO" id="GO:0005737">
    <property type="term" value="C:cytoplasm"/>
    <property type="evidence" value="ECO:0007669"/>
    <property type="project" value="UniProtKB-SubCell"/>
</dbReference>
<dbReference type="GO" id="GO:0003991">
    <property type="term" value="F:acetylglutamate kinase activity"/>
    <property type="evidence" value="ECO:0007669"/>
    <property type="project" value="UniProtKB-UniRule"/>
</dbReference>
<dbReference type="GO" id="GO:0005524">
    <property type="term" value="F:ATP binding"/>
    <property type="evidence" value="ECO:0007669"/>
    <property type="project" value="UniProtKB-UniRule"/>
</dbReference>
<dbReference type="GO" id="GO:0042450">
    <property type="term" value="P:arginine biosynthetic process via ornithine"/>
    <property type="evidence" value="ECO:0007669"/>
    <property type="project" value="UniProtKB-UniRule"/>
</dbReference>
<dbReference type="GO" id="GO:0006526">
    <property type="term" value="P:L-arginine biosynthetic process"/>
    <property type="evidence" value="ECO:0007669"/>
    <property type="project" value="UniProtKB-UniPathway"/>
</dbReference>
<dbReference type="CDD" id="cd04238">
    <property type="entry name" value="AAK_NAGK-like"/>
    <property type="match status" value="1"/>
</dbReference>
<dbReference type="FunFam" id="3.40.1160.10:FF:000037">
    <property type="entry name" value="Acetylglutamate kinase"/>
    <property type="match status" value="1"/>
</dbReference>
<dbReference type="Gene3D" id="3.40.1160.10">
    <property type="entry name" value="Acetylglutamate kinase-like"/>
    <property type="match status" value="1"/>
</dbReference>
<dbReference type="HAMAP" id="MF_00082">
    <property type="entry name" value="ArgB"/>
    <property type="match status" value="1"/>
</dbReference>
<dbReference type="InterPro" id="IPR036393">
    <property type="entry name" value="AceGlu_kinase-like_sf"/>
</dbReference>
<dbReference type="InterPro" id="IPR004662">
    <property type="entry name" value="AcgluKinase_fam"/>
</dbReference>
<dbReference type="InterPro" id="IPR037528">
    <property type="entry name" value="ArgB"/>
</dbReference>
<dbReference type="InterPro" id="IPR001048">
    <property type="entry name" value="Asp/Glu/Uridylate_kinase"/>
</dbReference>
<dbReference type="NCBIfam" id="TIGR00761">
    <property type="entry name" value="argB"/>
    <property type="match status" value="1"/>
</dbReference>
<dbReference type="PANTHER" id="PTHR23342">
    <property type="entry name" value="N-ACETYLGLUTAMATE SYNTHASE"/>
    <property type="match status" value="1"/>
</dbReference>
<dbReference type="PANTHER" id="PTHR23342:SF0">
    <property type="entry name" value="N-ACETYLGLUTAMATE SYNTHASE, MITOCHONDRIAL"/>
    <property type="match status" value="1"/>
</dbReference>
<dbReference type="Pfam" id="PF00696">
    <property type="entry name" value="AA_kinase"/>
    <property type="match status" value="1"/>
</dbReference>
<dbReference type="PIRSF" id="PIRSF000728">
    <property type="entry name" value="NAGK"/>
    <property type="match status" value="1"/>
</dbReference>
<dbReference type="SUPFAM" id="SSF53633">
    <property type="entry name" value="Carbamate kinase-like"/>
    <property type="match status" value="1"/>
</dbReference>
<protein>
    <recommendedName>
        <fullName evidence="1">Acetylglutamate kinase</fullName>
        <ecNumber evidence="1">2.7.2.8</ecNumber>
    </recommendedName>
    <alternativeName>
        <fullName evidence="1">N-acetyl-L-glutamate 5-phosphotransferase</fullName>
    </alternativeName>
    <alternativeName>
        <fullName evidence="1">NAG kinase</fullName>
        <shortName evidence="1">NAGK</shortName>
    </alternativeName>
</protein>
<reference key="1">
    <citation type="journal article" date="2001" name="Lancet">
        <title>Whole genome sequencing of meticillin-resistant Staphylococcus aureus.</title>
        <authorList>
            <person name="Kuroda M."/>
            <person name="Ohta T."/>
            <person name="Uchiyama I."/>
            <person name="Baba T."/>
            <person name="Yuzawa H."/>
            <person name="Kobayashi I."/>
            <person name="Cui L."/>
            <person name="Oguchi A."/>
            <person name="Aoki K."/>
            <person name="Nagai Y."/>
            <person name="Lian J.-Q."/>
            <person name="Ito T."/>
            <person name="Kanamori M."/>
            <person name="Matsumaru H."/>
            <person name="Maruyama A."/>
            <person name="Murakami H."/>
            <person name="Hosoyama A."/>
            <person name="Mizutani-Ui Y."/>
            <person name="Takahashi N.K."/>
            <person name="Sawano T."/>
            <person name="Inoue R."/>
            <person name="Kaito C."/>
            <person name="Sekimizu K."/>
            <person name="Hirakawa H."/>
            <person name="Kuhara S."/>
            <person name="Goto S."/>
            <person name="Yabuzaki J."/>
            <person name="Kanehisa M."/>
            <person name="Yamashita A."/>
            <person name="Oshima K."/>
            <person name="Furuya K."/>
            <person name="Yoshino C."/>
            <person name="Shiba T."/>
            <person name="Hattori M."/>
            <person name="Ogasawara N."/>
            <person name="Hayashi H."/>
            <person name="Hiramatsu K."/>
        </authorList>
    </citation>
    <scope>NUCLEOTIDE SEQUENCE [LARGE SCALE GENOMIC DNA]</scope>
    <source>
        <strain>N315</strain>
    </source>
</reference>
<feature type="chain" id="PRO_0000112664" description="Acetylglutamate kinase">
    <location>
        <begin position="1"/>
        <end position="254"/>
    </location>
</feature>
<feature type="binding site" evidence="1">
    <location>
        <begin position="40"/>
        <end position="41"/>
    </location>
    <ligand>
        <name>substrate</name>
    </ligand>
</feature>
<feature type="binding site" evidence="1">
    <location>
        <position position="62"/>
    </location>
    <ligand>
        <name>substrate</name>
    </ligand>
</feature>
<feature type="binding site" evidence="1">
    <location>
        <position position="154"/>
    </location>
    <ligand>
        <name>substrate</name>
    </ligand>
</feature>
<feature type="site" description="Transition state stabilizer" evidence="1">
    <location>
        <position position="7"/>
    </location>
</feature>
<feature type="site" description="Transition state stabilizer" evidence="1">
    <location>
        <position position="212"/>
    </location>
</feature>
<organism>
    <name type="scientific">Staphylococcus aureus (strain N315)</name>
    <dbReference type="NCBI Taxonomy" id="158879"/>
    <lineage>
        <taxon>Bacteria</taxon>
        <taxon>Bacillati</taxon>
        <taxon>Bacillota</taxon>
        <taxon>Bacilli</taxon>
        <taxon>Bacillales</taxon>
        <taxon>Staphylococcaceae</taxon>
        <taxon>Staphylococcus</taxon>
    </lineage>
</organism>
<comment type="function">
    <text evidence="1">Catalyzes the ATP-dependent phosphorylation of N-acetyl-L-glutamate.</text>
</comment>
<comment type="catalytic activity">
    <reaction evidence="1">
        <text>N-acetyl-L-glutamate + ATP = N-acetyl-L-glutamyl 5-phosphate + ADP</text>
        <dbReference type="Rhea" id="RHEA:14629"/>
        <dbReference type="ChEBI" id="CHEBI:30616"/>
        <dbReference type="ChEBI" id="CHEBI:44337"/>
        <dbReference type="ChEBI" id="CHEBI:57936"/>
        <dbReference type="ChEBI" id="CHEBI:456216"/>
        <dbReference type="EC" id="2.7.2.8"/>
    </reaction>
</comment>
<comment type="pathway">
    <text evidence="1">Amino-acid biosynthesis; L-arginine biosynthesis; N(2)-acetyl-L-ornithine from L-glutamate: step 2/4.</text>
</comment>
<comment type="subcellular location">
    <subcellularLocation>
        <location evidence="1">Cytoplasm</location>
    </subcellularLocation>
</comment>
<comment type="similarity">
    <text evidence="1">Belongs to the acetylglutamate kinase family. ArgB subfamily.</text>
</comment>
<evidence type="ECO:0000255" key="1">
    <source>
        <dbReference type="HAMAP-Rule" id="MF_00082"/>
    </source>
</evidence>
<proteinExistence type="inferred from homology"/>
<name>ARGB_STAAN</name>
<keyword id="KW-0028">Amino-acid biosynthesis</keyword>
<keyword id="KW-0055">Arginine biosynthesis</keyword>
<keyword id="KW-0067">ATP-binding</keyword>
<keyword id="KW-0963">Cytoplasm</keyword>
<keyword id="KW-0418">Kinase</keyword>
<keyword id="KW-0547">Nucleotide-binding</keyword>
<keyword id="KW-0808">Transferase</keyword>
<gene>
    <name evidence="1" type="primary">argB</name>
    <name type="ordered locus">SA0176</name>
</gene>
<accession>P63560</accession>
<accession>Q99X39</accession>
<sequence length="254" mass="27739">MKFIVIKIGGSTLSDMHPSIINNIKHLRSNNIYPIIVHGGGPFINEALSNQQIEPHFVNGLRVTDKATMTITKHTLIADVNTALVAQFNQHQCSAIGLCGLDAQLFEITSFDQQYGYVGVPTALNKDALQYLCTKFVPIINSIGFNNHDGEFYNINADTLAYFIASSLKAPIYVLSNIAGVLINDVVIPQLPLVDIHQYIEHGDIYGGMIPKVLDAKNAIENGCPKVIIASGNKPNIIESIYNNDFVGTTILNS</sequence>